<evidence type="ECO:0000255" key="1">
    <source>
        <dbReference type="PROSITE-ProRule" id="PRU00114"/>
    </source>
</evidence>
<evidence type="ECO:0000256" key="2">
    <source>
        <dbReference type="SAM" id="MobiDB-lite"/>
    </source>
</evidence>
<evidence type="ECO:0000269" key="3">
    <source>
    </source>
</evidence>
<evidence type="ECO:0000269" key="4">
    <source>
    </source>
</evidence>
<evidence type="ECO:0000269" key="5">
    <source>
    </source>
</evidence>
<evidence type="ECO:0000269" key="6">
    <source ref="6"/>
</evidence>
<evidence type="ECO:0000303" key="7">
    <source>
    </source>
</evidence>
<evidence type="ECO:0000303" key="8">
    <source>
    </source>
</evidence>
<evidence type="ECO:0000303" key="9">
    <source>
    </source>
</evidence>
<evidence type="ECO:0000303" key="10">
    <source>
    </source>
</evidence>
<evidence type="ECO:0000303" key="11">
    <source>
    </source>
</evidence>
<evidence type="ECO:0000303" key="12">
    <source>
    </source>
</evidence>
<evidence type="ECO:0000303" key="13">
    <source ref="9"/>
</evidence>
<evidence type="ECO:0000305" key="14"/>
<evidence type="ECO:0000305" key="15">
    <source>
    </source>
</evidence>
<evidence type="ECO:0000305" key="16">
    <source>
    </source>
</evidence>
<evidence type="ECO:0000305" key="17">
    <source>
    </source>
</evidence>
<evidence type="ECO:0000305" key="18">
    <source>
    </source>
</evidence>
<evidence type="ECO:0000305" key="19">
    <source ref="6"/>
</evidence>
<evidence type="ECO:0007829" key="20">
    <source>
        <dbReference type="PDB" id="1PEW"/>
    </source>
</evidence>
<evidence type="ECO:0007829" key="21">
    <source>
        <dbReference type="PDB" id="5IR3"/>
    </source>
</evidence>
<accession>P01721</accession>
<accession>A0A075B6I2</accession>
<accession>P01722</accession>
<accession>P06317</accession>
<accession>P06318</accession>
<accession>P06319</accession>
<dbReference type="EMBL" id="AC245060">
    <property type="status" value="NOT_ANNOTATED_CDS"/>
    <property type="molecule type" value="Genomic_DNA"/>
</dbReference>
<dbReference type="PIR" id="A01987">
    <property type="entry name" value="L6HUAR"/>
</dbReference>
<dbReference type="PIR" id="A01988">
    <property type="entry name" value="L6HUST"/>
</dbReference>
<dbReference type="PIR" id="A01989">
    <property type="entry name" value="L6HULT"/>
</dbReference>
<dbReference type="PIR" id="A01990">
    <property type="entry name" value="L6HUEB"/>
</dbReference>
<dbReference type="PIR" id="A01991">
    <property type="entry name" value="L6HU48"/>
</dbReference>
<dbReference type="PDB" id="1CD0">
    <property type="method" value="X-ray"/>
    <property type="resolution" value="1.90 A"/>
    <property type="chains" value="A/B=20-117"/>
</dbReference>
<dbReference type="PDB" id="1PEW">
    <property type="method" value="X-ray"/>
    <property type="resolution" value="1.60 A"/>
    <property type="chains" value="A/B=20-117"/>
</dbReference>
<dbReference type="PDB" id="2CD0">
    <property type="method" value="X-ray"/>
    <property type="resolution" value="1.80 A"/>
    <property type="chains" value="A/B=20-117"/>
</dbReference>
<dbReference type="PDB" id="5IR3">
    <property type="method" value="X-ray"/>
    <property type="resolution" value="1.70 A"/>
    <property type="chains" value="A=20-117"/>
</dbReference>
<dbReference type="PDBsum" id="1CD0"/>
<dbReference type="PDBsum" id="1PEW"/>
<dbReference type="PDBsum" id="2CD0"/>
<dbReference type="PDBsum" id="5IR3"/>
<dbReference type="EMDB" id="EMD-22497"/>
<dbReference type="EMDB" id="EMD-43530"/>
<dbReference type="EMDB" id="EMD-43531"/>
<dbReference type="EMDB" id="EMD-43532"/>
<dbReference type="EMDB" id="EMD-43544"/>
<dbReference type="EMDB" id="EMD-43559"/>
<dbReference type="SMR" id="P01721"/>
<dbReference type="FunCoup" id="P01721">
    <property type="interactions" value="463"/>
</dbReference>
<dbReference type="IntAct" id="P01721">
    <property type="interactions" value="9"/>
</dbReference>
<dbReference type="BindingDB" id="P01721"/>
<dbReference type="ChEMBL" id="CHEMBL4739844"/>
<dbReference type="IMGT_GENE-DB" id="IGLV6-57"/>
<dbReference type="BioMuta" id="IGLV6-57"/>
<dbReference type="DMDM" id="126575"/>
<dbReference type="MassIVE" id="P01721"/>
<dbReference type="Ensembl" id="ENST00000390285.4">
    <property type="protein sequence ID" value="ENSP00000374820.4"/>
    <property type="gene ID" value="ENSG00000211640.4"/>
</dbReference>
<dbReference type="AGR" id="HGNC:5927"/>
<dbReference type="GeneCards" id="IGLV6-57"/>
<dbReference type="HGNC" id="HGNC:5927">
    <property type="gene designation" value="IGLV6-57"/>
</dbReference>
<dbReference type="HPA" id="ENSG00000211640">
    <property type="expression patterns" value="Tissue enhanced (lymphoid tissue, urinary bladder)"/>
</dbReference>
<dbReference type="neXtProt" id="NX_P01721"/>
<dbReference type="OpenTargets" id="ENSG00000211640"/>
<dbReference type="VEuPathDB" id="HostDB:ENSG00000211640"/>
<dbReference type="GeneTree" id="ENSGT00940000161640"/>
<dbReference type="InParanoid" id="P01721"/>
<dbReference type="OMA" id="YSDDQRP"/>
<dbReference type="OrthoDB" id="8908372at2759"/>
<dbReference type="PAN-GO" id="P01721">
    <property type="GO annotations" value="3 GO annotations based on evolutionary models"/>
</dbReference>
<dbReference type="PathwayCommons" id="P01721"/>
<dbReference type="Reactome" id="R-HSA-166663">
    <property type="pathway name" value="Initial triggering of complement"/>
</dbReference>
<dbReference type="Reactome" id="R-HSA-173623">
    <property type="pathway name" value="Classical antibody-mediated complement activation"/>
</dbReference>
<dbReference type="Reactome" id="R-HSA-198933">
    <property type="pathway name" value="Immunoregulatory interactions between a Lymphoid and a non-Lymphoid cell"/>
</dbReference>
<dbReference type="Reactome" id="R-HSA-202733">
    <property type="pathway name" value="Cell surface interactions at the vascular wall"/>
</dbReference>
<dbReference type="Reactome" id="R-HSA-2029481">
    <property type="pathway name" value="FCGR activation"/>
</dbReference>
<dbReference type="Reactome" id="R-HSA-2029482">
    <property type="pathway name" value="Regulation of actin dynamics for phagocytic cup formation"/>
</dbReference>
<dbReference type="Reactome" id="R-HSA-2029485">
    <property type="pathway name" value="Role of phospholipids in phagocytosis"/>
</dbReference>
<dbReference type="Reactome" id="R-HSA-2168880">
    <property type="pathway name" value="Scavenging of heme from plasma"/>
</dbReference>
<dbReference type="Reactome" id="R-HSA-2454202">
    <property type="pathway name" value="Fc epsilon receptor (FCERI) signaling"/>
</dbReference>
<dbReference type="Reactome" id="R-HSA-2730905">
    <property type="pathway name" value="Role of LAT2/NTAL/LAB on calcium mobilization"/>
</dbReference>
<dbReference type="Reactome" id="R-HSA-2871796">
    <property type="pathway name" value="FCERI mediated MAPK activation"/>
</dbReference>
<dbReference type="Reactome" id="R-HSA-2871809">
    <property type="pathway name" value="FCERI mediated Ca+2 mobilization"/>
</dbReference>
<dbReference type="Reactome" id="R-HSA-2871837">
    <property type="pathway name" value="FCERI mediated NF-kB activation"/>
</dbReference>
<dbReference type="Reactome" id="R-HSA-5690714">
    <property type="pathway name" value="CD22 mediated BCR regulation"/>
</dbReference>
<dbReference type="Reactome" id="R-HSA-9664323">
    <property type="pathway name" value="FCGR3A-mediated IL10 synthesis"/>
</dbReference>
<dbReference type="Reactome" id="R-HSA-9664422">
    <property type="pathway name" value="FCGR3A-mediated phagocytosis"/>
</dbReference>
<dbReference type="Reactome" id="R-HSA-9679191">
    <property type="pathway name" value="Potential therapeutics for SARS"/>
</dbReference>
<dbReference type="Reactome" id="R-HSA-977606">
    <property type="pathway name" value="Regulation of Complement cascade"/>
</dbReference>
<dbReference type="Reactome" id="R-HSA-983695">
    <property type="pathway name" value="Antigen activates B Cell Receptor (BCR) leading to generation of second messengers"/>
</dbReference>
<dbReference type="ChiTaRS" id="IGLV6-57">
    <property type="organism name" value="human"/>
</dbReference>
<dbReference type="EvolutionaryTrace" id="P01721"/>
<dbReference type="Pharos" id="P01721">
    <property type="development level" value="Tchem"/>
</dbReference>
<dbReference type="PRO" id="PR:P01721"/>
<dbReference type="Proteomes" id="UP000005640">
    <property type="component" value="Chromosome 22"/>
</dbReference>
<dbReference type="RNAct" id="P01721">
    <property type="molecule type" value="protein"/>
</dbReference>
<dbReference type="Bgee" id="ENSG00000211640">
    <property type="expression patterns" value="Expressed in duodenum and 94 other cell types or tissues"/>
</dbReference>
<dbReference type="GO" id="GO:0005576">
    <property type="term" value="C:extracellular region"/>
    <property type="evidence" value="ECO:0000304"/>
    <property type="project" value="Reactome"/>
</dbReference>
<dbReference type="GO" id="GO:0019814">
    <property type="term" value="C:immunoglobulin complex"/>
    <property type="evidence" value="ECO:0000318"/>
    <property type="project" value="GO_Central"/>
</dbReference>
<dbReference type="GO" id="GO:0005886">
    <property type="term" value="C:plasma membrane"/>
    <property type="evidence" value="ECO:0000304"/>
    <property type="project" value="Reactome"/>
</dbReference>
<dbReference type="GO" id="GO:0003823">
    <property type="term" value="F:antigen binding"/>
    <property type="evidence" value="ECO:0000303"/>
    <property type="project" value="UniProtKB"/>
</dbReference>
<dbReference type="GO" id="GO:0002250">
    <property type="term" value="P:adaptive immune response"/>
    <property type="evidence" value="ECO:0007669"/>
    <property type="project" value="UniProtKB-KW"/>
</dbReference>
<dbReference type="GO" id="GO:0006955">
    <property type="term" value="P:immune response"/>
    <property type="evidence" value="ECO:0000318"/>
    <property type="project" value="GO_Central"/>
</dbReference>
<dbReference type="FunFam" id="2.60.40.10:FF:001920">
    <property type="entry name" value="Immunoglobulin lambda variable 6-57"/>
    <property type="match status" value="1"/>
</dbReference>
<dbReference type="Gene3D" id="2.60.40.10">
    <property type="entry name" value="Immunoglobulins"/>
    <property type="match status" value="1"/>
</dbReference>
<dbReference type="InterPro" id="IPR007110">
    <property type="entry name" value="Ig-like_dom"/>
</dbReference>
<dbReference type="InterPro" id="IPR036179">
    <property type="entry name" value="Ig-like_dom_sf"/>
</dbReference>
<dbReference type="InterPro" id="IPR013783">
    <property type="entry name" value="Ig-like_fold"/>
</dbReference>
<dbReference type="InterPro" id="IPR003599">
    <property type="entry name" value="Ig_sub"/>
</dbReference>
<dbReference type="InterPro" id="IPR013106">
    <property type="entry name" value="Ig_V-set"/>
</dbReference>
<dbReference type="InterPro" id="IPR050150">
    <property type="entry name" value="IgV_Light_Chain"/>
</dbReference>
<dbReference type="PANTHER" id="PTHR23267">
    <property type="entry name" value="IMMUNOGLOBULIN LIGHT CHAIN"/>
    <property type="match status" value="1"/>
</dbReference>
<dbReference type="Pfam" id="PF07686">
    <property type="entry name" value="V-set"/>
    <property type="match status" value="1"/>
</dbReference>
<dbReference type="SMART" id="SM00409">
    <property type="entry name" value="IG"/>
    <property type="match status" value="1"/>
</dbReference>
<dbReference type="SMART" id="SM00406">
    <property type="entry name" value="IGv"/>
    <property type="match status" value="1"/>
</dbReference>
<dbReference type="SUPFAM" id="SSF48726">
    <property type="entry name" value="Immunoglobulin"/>
    <property type="match status" value="1"/>
</dbReference>
<dbReference type="PROSITE" id="PS50835">
    <property type="entry name" value="IG_LIKE"/>
    <property type="match status" value="1"/>
</dbReference>
<keyword id="KW-0002">3D-structure</keyword>
<keyword id="KW-1064">Adaptive immunity</keyword>
<keyword id="KW-1003">Cell membrane</keyword>
<keyword id="KW-0903">Direct protein sequencing</keyword>
<keyword id="KW-1015">Disulfide bond</keyword>
<keyword id="KW-0391">Immunity</keyword>
<keyword id="KW-1280">Immunoglobulin</keyword>
<keyword id="KW-0393">Immunoglobulin domain</keyword>
<keyword id="KW-0472">Membrane</keyword>
<keyword id="KW-1267">Proteomics identification</keyword>
<keyword id="KW-1185">Reference proteome</keyword>
<keyword id="KW-0964">Secreted</keyword>
<keyword id="KW-0732">Signal</keyword>
<name>LV657_HUMAN</name>
<reference key="1">
    <citation type="journal article" date="1985" name="Nucleic Acids Res.">
        <title>Cloning and sequence analysis of an Ig lambda light chain mRNA expressed in the Burkitt's lymphoma cell line EB4.</title>
        <authorList>
            <person name="Anderson M.L.M."/>
            <person name="Brown L."/>
            <person name="McKenzie E."/>
            <person name="Kellow J.E."/>
            <person name="Young B.D."/>
        </authorList>
    </citation>
    <scope>NUCLEOTIDE SEQUENCE [MRNA]</scope>
</reference>
<reference key="2">
    <citation type="journal article" date="1999" name="Nature">
        <title>The DNA sequence of human chromosome 22.</title>
        <authorList>
            <person name="Dunham I."/>
            <person name="Hunt A.R."/>
            <person name="Collins J.E."/>
            <person name="Bruskiewich R."/>
            <person name="Beare D.M."/>
            <person name="Clamp M."/>
            <person name="Smink L.J."/>
            <person name="Ainscough R."/>
            <person name="Almeida J.P."/>
            <person name="Babbage A.K."/>
            <person name="Bagguley C."/>
            <person name="Bailey J."/>
            <person name="Barlow K.F."/>
            <person name="Bates K.N."/>
            <person name="Beasley O.P."/>
            <person name="Bird C.P."/>
            <person name="Blakey S.E."/>
            <person name="Bridgeman A.M."/>
            <person name="Buck D."/>
            <person name="Burgess J."/>
            <person name="Burrill W.D."/>
            <person name="Burton J."/>
            <person name="Carder C."/>
            <person name="Carter N.P."/>
            <person name="Chen Y."/>
            <person name="Clark G."/>
            <person name="Clegg S.M."/>
            <person name="Cobley V.E."/>
            <person name="Cole C.G."/>
            <person name="Collier R.E."/>
            <person name="Connor R."/>
            <person name="Conroy D."/>
            <person name="Corby N.R."/>
            <person name="Coville G.J."/>
            <person name="Cox A.V."/>
            <person name="Davis J."/>
            <person name="Dawson E."/>
            <person name="Dhami P.D."/>
            <person name="Dockree C."/>
            <person name="Dodsworth S.J."/>
            <person name="Durbin R.M."/>
            <person name="Ellington A.G."/>
            <person name="Evans K.L."/>
            <person name="Fey J.M."/>
            <person name="Fleming K."/>
            <person name="French L."/>
            <person name="Garner A.A."/>
            <person name="Gilbert J.G.R."/>
            <person name="Goward M.E."/>
            <person name="Grafham D.V."/>
            <person name="Griffiths M.N.D."/>
            <person name="Hall C."/>
            <person name="Hall R.E."/>
            <person name="Hall-Tamlyn G."/>
            <person name="Heathcott R.W."/>
            <person name="Ho S."/>
            <person name="Holmes S."/>
            <person name="Hunt S.E."/>
            <person name="Jones M.C."/>
            <person name="Kershaw J."/>
            <person name="Kimberley A.M."/>
            <person name="King A."/>
            <person name="Laird G.K."/>
            <person name="Langford C.F."/>
            <person name="Leversha M.A."/>
            <person name="Lloyd C."/>
            <person name="Lloyd D.M."/>
            <person name="Martyn I.D."/>
            <person name="Mashreghi-Mohammadi M."/>
            <person name="Matthews L.H."/>
            <person name="Mccann O.T."/>
            <person name="Mcclay J."/>
            <person name="Mclaren S."/>
            <person name="McMurray A.A."/>
            <person name="Milne S.A."/>
            <person name="Mortimore B.J."/>
            <person name="Odell C.N."/>
            <person name="Pavitt R."/>
            <person name="Pearce A.V."/>
            <person name="Pearson D."/>
            <person name="Phillimore B.J.C.T."/>
            <person name="Phillips S.H."/>
            <person name="Plumb R.W."/>
            <person name="Ramsay H."/>
            <person name="Ramsey Y."/>
            <person name="Rogers L."/>
            <person name="Ross M.T."/>
            <person name="Scott C.E."/>
            <person name="Sehra H.K."/>
            <person name="Skuce C.D."/>
            <person name="Smalley S."/>
            <person name="Smith M.L."/>
            <person name="Soderlund C."/>
            <person name="Spragon L."/>
            <person name="Steward C.A."/>
            <person name="Sulston J.E."/>
            <person name="Swann R.M."/>
            <person name="Vaudin M."/>
            <person name="Wall M."/>
            <person name="Wallis J.M."/>
            <person name="Whiteley M.N."/>
            <person name="Willey D.L."/>
            <person name="Williams L."/>
            <person name="Williams S.A."/>
            <person name="Williamson H."/>
            <person name="Wilmer T.E."/>
            <person name="Wilming L."/>
            <person name="Wright C.L."/>
            <person name="Hubbard T."/>
            <person name="Bentley D.R."/>
            <person name="Beck S."/>
            <person name="Rogers J."/>
            <person name="Shimizu N."/>
            <person name="Minoshima S."/>
            <person name="Kawasaki K."/>
            <person name="Sasaki T."/>
            <person name="Asakawa S."/>
            <person name="Kudoh J."/>
            <person name="Shintani A."/>
            <person name="Shibuya K."/>
            <person name="Yoshizaki Y."/>
            <person name="Aoki N."/>
            <person name="Mitsuyama S."/>
            <person name="Roe B.A."/>
            <person name="Chen F."/>
            <person name="Chu L."/>
            <person name="Crabtree J."/>
            <person name="Deschamps S."/>
            <person name="Do A."/>
            <person name="Do T."/>
            <person name="Dorman A."/>
            <person name="Fang F."/>
            <person name="Fu Y."/>
            <person name="Hu P."/>
            <person name="Hua A."/>
            <person name="Kenton S."/>
            <person name="Lai H."/>
            <person name="Lao H.I."/>
            <person name="Lewis J."/>
            <person name="Lewis S."/>
            <person name="Lin S.-P."/>
            <person name="Loh P."/>
            <person name="Malaj E."/>
            <person name="Nguyen T."/>
            <person name="Pan H."/>
            <person name="Phan S."/>
            <person name="Qi S."/>
            <person name="Qian Y."/>
            <person name="Ray L."/>
            <person name="Ren Q."/>
            <person name="Shaull S."/>
            <person name="Sloan D."/>
            <person name="Song L."/>
            <person name="Wang Q."/>
            <person name="Wang Y."/>
            <person name="Wang Z."/>
            <person name="White J."/>
            <person name="Willingham D."/>
            <person name="Wu H."/>
            <person name="Yao Z."/>
            <person name="Zhan M."/>
            <person name="Zhang G."/>
            <person name="Chissoe S."/>
            <person name="Murray J."/>
            <person name="Miller N."/>
            <person name="Minx P."/>
            <person name="Fulton R."/>
            <person name="Johnson D."/>
            <person name="Bemis G."/>
            <person name="Bentley D."/>
            <person name="Bradshaw H."/>
            <person name="Bourne S."/>
            <person name="Cordes M."/>
            <person name="Du Z."/>
            <person name="Fulton L."/>
            <person name="Goela D."/>
            <person name="Graves T."/>
            <person name="Hawkins J."/>
            <person name="Hinds K."/>
            <person name="Kemp K."/>
            <person name="Latreille P."/>
            <person name="Layman D."/>
            <person name="Ozersky P."/>
            <person name="Rohlfing T."/>
            <person name="Scheet P."/>
            <person name="Walker C."/>
            <person name="Wamsley A."/>
            <person name="Wohldmann P."/>
            <person name="Pepin K."/>
            <person name="Nelson J."/>
            <person name="Korf I."/>
            <person name="Bedell J.A."/>
            <person name="Hillier L.W."/>
            <person name="Mardis E."/>
            <person name="Waterston R."/>
            <person name="Wilson R."/>
            <person name="Emanuel B.S."/>
            <person name="Shaikh T."/>
            <person name="Kurahashi H."/>
            <person name="Saitta S."/>
            <person name="Budarf M.L."/>
            <person name="McDermid H.E."/>
            <person name="Johnson A."/>
            <person name="Wong A.C.C."/>
            <person name="Morrow B.E."/>
            <person name="Edelmann L."/>
            <person name="Kim U.J."/>
            <person name="Shizuya H."/>
            <person name="Simon M.I."/>
            <person name="Dumanski J.P."/>
            <person name="Peyrard M."/>
            <person name="Kedra D."/>
            <person name="Seroussi E."/>
            <person name="Fransson I."/>
            <person name="Tapia I."/>
            <person name="Bruder C.E."/>
            <person name="O'Brien K.P."/>
            <person name="Wilkinson P."/>
            <person name="Bodenteich A."/>
            <person name="Hartman K."/>
            <person name="Hu X."/>
            <person name="Khan A.S."/>
            <person name="Lane L."/>
            <person name="Tilahun Y."/>
            <person name="Wright H."/>
        </authorList>
    </citation>
    <scope>NUCLEOTIDE SEQUENCE [LARGE SCALE GENOMIC DNA] (IMGT ALLELE IGLV6-57*01)</scope>
</reference>
<reference key="3">
    <citation type="journal article" date="1979" name="J. Biochem.">
        <title>Comparative study on the structure of the light chains of human immunoglobulins. II. Assignment of a new subgroup.</title>
        <authorList>
            <person name="Takahashi N."/>
            <person name="Takayasu T."/>
            <person name="Isobe T."/>
            <person name="Shinoda T."/>
            <person name="Okuyama T."/>
            <person name="Shimizu A."/>
        </authorList>
    </citation>
    <scope>PROTEIN SEQUENCE OF 20-117</scope>
</reference>
<reference key="4">
    <citation type="journal article" date="1981" name="Biochem. J.">
        <title>The complete amino acid sequence of a prototype immunoglobulin-lambda light-chain-type amyloid-fibril protein AR.</title>
        <authorList>
            <person name="Sletten K."/>
            <person name="Natvig J.B."/>
            <person name="Husby G."/>
            <person name="Juul J."/>
        </authorList>
    </citation>
    <scope>PROTEIN SEQUENCE OF 20-117</scope>
</reference>
<reference key="5">
    <citation type="journal article" date="1985" name="Scand. J. Immunol.">
        <title>Amino acid sequence of a lambda VI primary (AL) amyloid protein (WLT).</title>
        <authorList>
            <person name="Dwulet F.E."/>
            <person name="Strako K."/>
            <person name="Benson M.D."/>
        </authorList>
    </citation>
    <scope>PROTEIN SEQUENCE OF 20-117</scope>
</reference>
<reference key="6">
    <citation type="book" date="1986" name="Amyloidosis">
        <title>Light chain variable region subgroups of monoclonal immunoglobulins in amyloidosis AL.</title>
        <editorList>
            <person name="Glenner G.G."/>
            <person name="Osserman E.F."/>
            <person name="Benditt E.P."/>
            <person name="Calkins E."/>
            <person name="Cohen A.S."/>
            <person name="Zucker-Franklin D."/>
        </editorList>
        <authorList>
            <person name="Solomon A."/>
            <person name="Kyle R.A."/>
            <person name="Frangione B."/>
        </authorList>
    </citation>
    <scope>PROTEIN SEQUENCE OF 20-117</scope>
</reference>
<reference key="7">
    <citation type="journal article" date="1999" name="Exp. Clin. Immunogenet.">
        <title>Protein displays of the human immunoglobulin heavy, kappa and lambda variable and joining regions.</title>
        <authorList>
            <person name="Scaviner D."/>
            <person name="Barbie V."/>
            <person name="Ruiz M."/>
            <person name="Lefranc M.P."/>
        </authorList>
    </citation>
    <scope>REGION</scope>
</reference>
<reference key="8">
    <citation type="journal article" date="2001" name="Exp. Clin. Immunogenet.">
        <title>Nomenclature of the human immunoglobulin lambda (IGL) genes.</title>
        <authorList>
            <person name="Lefranc M.P."/>
        </authorList>
    </citation>
    <scope>NOMENCLATURE</scope>
</reference>
<reference key="9">
    <citation type="book" date="2001" name="The Immunoglobulin FactsBook.">
        <title>The Immunoglobulin FactsBook.</title>
        <editorList>
            <person name="Lefranc M.P."/>
            <person name="Lefranc G."/>
        </editorList>
        <authorList>
            <person name="Lefranc M.P."/>
            <person name="Lefranc G."/>
        </authorList>
    </citation>
    <scope>NOMENCLATURE</scope>
</reference>
<reference key="10">
    <citation type="journal article" date="2007" name="Annu. Rev. Genet.">
        <title>Immunoglobulin somatic hypermutation.</title>
        <authorList>
            <person name="Teng G."/>
            <person name="Papavasiliou F.N."/>
        </authorList>
    </citation>
    <scope>REVIEW ON SOMATIC HYPERMUTATION</scope>
</reference>
<reference key="11">
    <citation type="journal article" date="2010" name="J. Allergy Clin. Immunol.">
        <title>Structure and function of immunoglobulins.</title>
        <authorList>
            <person name="Schroeder H.W. Jr."/>
            <person name="Cavacini L."/>
        </authorList>
    </citation>
    <scope>REVIEW ON IMMUNOGLOBULINS</scope>
</reference>
<reference key="12">
    <citation type="journal article" date="2012" name="Nat. Rev. Immunol.">
        <title>Molecular programming of B cell memory.</title>
        <authorList>
            <person name="McHeyzer-Williams M."/>
            <person name="Okitsu S."/>
            <person name="Wang N."/>
            <person name="McHeyzer-Williams L."/>
        </authorList>
    </citation>
    <scope>REVIEW ON FUNCTION</scope>
</reference>
<reference key="13">
    <citation type="journal article" date="2014" name="Front. Immunol.">
        <title>Immunoglobulin and T Cell Receptor Genes: IMGT((R)) and the Birth and Rise of Immunoinformatics.</title>
        <authorList>
            <person name="Lefranc M.P."/>
        </authorList>
    </citation>
    <scope>NOMENCLATURE</scope>
</reference>
<protein>
    <recommendedName>
        <fullName evidence="8 13">Immunoglobulin lambda variable 6-57</fullName>
    </recommendedName>
    <alternativeName>
        <fullName evidence="18">Ig lambda chain V-VI region AR</fullName>
    </alternativeName>
    <alternativeName>
        <fullName evidence="16">Ig lambda chain V-VI region EB4</fullName>
    </alternativeName>
    <alternativeName>
        <fullName evidence="15">Ig lambda chain V-VI region NIG-48</fullName>
    </alternativeName>
    <alternativeName>
        <fullName evidence="19">Ig lambda chain V-VI region SUT</fullName>
    </alternativeName>
    <alternativeName>
        <fullName evidence="17">Ig lambda chain V-VI region WLT</fullName>
    </alternativeName>
</protein>
<comment type="function">
    <text evidence="9 10 11 12">V region of the variable domain of immunoglobulin light chains that participates in the antigen recognition (PubMed:24600447). Immunoglobulins, also known as antibodies, are membrane-bound or secreted glycoproteins produced by B lymphocytes. In the recognition phase of humoral immunity, the membrane-bound immunoglobulins serve as receptors which, upon binding of a specific antigen, trigger the clonal expansion and differentiation of B lymphocytes into immunoglobulins-secreting plasma cells. Secreted immunoglobulins mediate the effector phase of humoral immunity, which results in the elimination of bound antigens (PubMed:20176268, PubMed:22158414). The antigen binding site is formed by the variable domain of one heavy chain, together with that of its associated light chain. Thus, each immunoglobulin has two antigen binding sites with remarkable affinity for a particular antigen. The variable domains are assembled by a process called V-(D)-J rearrangement and can then be subjected to somatic hypermutations which, after exposure to antigen and selection, allow affinity maturation for a particular antigen (PubMed:17576170, PubMed:20176268).</text>
</comment>
<comment type="subunit">
    <text evidence="10">Immunoglobulins are composed of two identical heavy chains and two identical light chains; disulfide-linked.</text>
</comment>
<comment type="interaction">
    <interactant intactId="EBI-54607224">
        <id>P01721</id>
    </interactant>
    <interactant intactId="EBI-354921">
        <id>P11021</id>
        <label>HSPA5</label>
    </interactant>
    <organismsDiffer>false</organismsDiffer>
    <experiments>3</experiments>
</comment>
<comment type="subcellular location">
    <subcellularLocation>
        <location evidence="10 11">Secreted</location>
    </subcellularLocation>
    <subcellularLocation>
        <location evidence="10 11">Cell membrane</location>
    </subcellularLocation>
</comment>
<comment type="polymorphism">
    <text>There are several alleles. The sequence shown is that of IMGT allele IGLV6-57*01.</text>
</comment>
<comment type="caution">
    <text evidence="14">For an example of a full-length immunoglobulin lambda light chain see AC P0DOX8.</text>
</comment>
<feature type="signal peptide" evidence="3 4 5 6">
    <location>
        <begin position="1"/>
        <end position="19"/>
    </location>
</feature>
<feature type="chain" id="PRO_0000059850" description="Immunoglobulin lambda variable 6-57" evidence="3 4 5 6">
    <location>
        <begin position="20"/>
        <end position="117"/>
    </location>
</feature>
<feature type="domain" description="Ig-like" evidence="1">
    <location>
        <begin position="20"/>
        <end position="117" status="greater than"/>
    </location>
</feature>
<feature type="region of interest" description="Framework-1" evidence="7">
    <location>
        <begin position="20"/>
        <end position="44"/>
    </location>
</feature>
<feature type="region of interest" description="Complementarity-determining-1" evidence="7">
    <location>
        <begin position="45"/>
        <end position="52"/>
    </location>
</feature>
<feature type="region of interest" description="Framework-2" evidence="7">
    <location>
        <begin position="53"/>
        <end position="69"/>
    </location>
</feature>
<feature type="region of interest" description="Disordered" evidence="2">
    <location>
        <begin position="65"/>
        <end position="97"/>
    </location>
</feature>
<feature type="region of interest" description="Complementarity-determining-2" evidence="7">
    <location>
        <begin position="70"/>
        <end position="72"/>
    </location>
</feature>
<feature type="region of interest" description="Framework-3" evidence="7">
    <location>
        <begin position="73"/>
        <end position="110"/>
    </location>
</feature>
<feature type="region of interest" description="Complementarity-determining-3" evidence="7">
    <location>
        <begin position="111"/>
        <end position="117" status="greater than"/>
    </location>
</feature>
<feature type="compositionally biased region" description="Low complexity" evidence="2">
    <location>
        <begin position="83"/>
        <end position="97"/>
    </location>
</feature>
<feature type="disulfide bond" evidence="1">
    <location>
        <begin position="41"/>
        <end position="110"/>
    </location>
</feature>
<feature type="sequence conflict" description="In Ref. 1." evidence="14" ref="1">
    <original>GS</original>
    <variation>DC</variation>
    <location>
        <begin position="16"/>
        <end position="17"/>
    </location>
</feature>
<feature type="sequence conflict" description="In Ref. 4; AA sequence and 6; AA sequence." evidence="14" ref="4 6">
    <original>N</original>
    <variation>D</variation>
    <location>
        <position position="20"/>
    </location>
</feature>
<feature type="sequence conflict" description="In Ref. 3; AA sequence." evidence="14" ref="3">
    <original>F</original>
    <variation>L</variation>
    <location>
        <position position="21"/>
    </location>
</feature>
<feature type="sequence conflict" description="In Ref. 3; AA sequence." evidence="14" ref="3">
    <original>T</original>
    <variation>I</variation>
    <location>
        <position position="24"/>
    </location>
</feature>
<feature type="sequence conflict" description="In Ref. 5; AA sequence." evidence="14" ref="5">
    <original>H</original>
    <variation>L</variation>
    <location>
        <position position="27"/>
    </location>
</feature>
<feature type="sequence conflict" description="In Ref. 3; AA sequence." evidence="14" ref="3">
    <original>H</original>
    <variation>P</variation>
    <location>
        <position position="27"/>
    </location>
</feature>
<feature type="sequence conflict" description="In Ref. 5; AA sequence." evidence="14" ref="5">
    <original>E</original>
    <variation>G</variation>
    <location>
        <position position="31"/>
    </location>
</feature>
<feature type="sequence conflict" description="In Ref. 5; AA sequence." evidence="14" ref="5">
    <original>G</original>
    <variation>E</variation>
    <location>
        <position position="34"/>
    </location>
</feature>
<feature type="sequence conflict" description="In Ref. 6; AA sequence." evidence="14" ref="6">
    <original>T</original>
    <variation>I</variation>
    <location>
        <position position="38"/>
    </location>
</feature>
<feature type="sequence conflict" description="In Ref. 4; AA sequence." evidence="14" ref="4">
    <original>I</original>
    <variation>F</variation>
    <location>
        <position position="39"/>
    </location>
</feature>
<feature type="sequence conflict" description="In Ref. 3; AA sequence." evidence="14" ref="3">
    <original>I</original>
    <variation>M</variation>
    <location>
        <position position="39"/>
    </location>
</feature>
<feature type="sequence conflict" description="In Ref. 6; AA sequence." evidence="14" ref="6">
    <original>GSSGS</original>
    <variation>RSDGT</variation>
    <location>
        <begin position="43"/>
        <end position="47"/>
    </location>
</feature>
<feature type="sequence conflict" description="In Ref. 3; AA sequence." evidence="14" ref="3">
    <original>GSSG</original>
    <variation>RTSD</variation>
    <location>
        <begin position="43"/>
        <end position="46"/>
    </location>
</feature>
<feature type="sequence conflict" description="In Ref. 1." evidence="14" ref="1">
    <original>S</original>
    <variation>N</variation>
    <location>
        <position position="44"/>
    </location>
</feature>
<feature type="sequence conflict" description="In Ref. 4; AA sequence." evidence="14" ref="4">
    <original>S</original>
    <variation>G</variation>
    <location>
        <position position="45"/>
    </location>
</feature>
<feature type="sequence conflict" description="In Ref. 5; AA sequence." evidence="14" ref="5">
    <original>A</original>
    <variation>G</variation>
    <location>
        <position position="49"/>
    </location>
</feature>
<feature type="sequence conflict" description="In Ref. 4; AA sequence." evidence="14" ref="4">
    <original>SNY</original>
    <variation>DSF</variation>
    <location>
        <begin position="50"/>
        <end position="52"/>
    </location>
</feature>
<feature type="sequence conflict" description="In Ref. 6; AA sequence." evidence="14" ref="6">
    <original>SN</original>
    <variation>GY</variation>
    <location>
        <begin position="50"/>
        <end position="51"/>
    </location>
</feature>
<feature type="sequence conflict" description="In Ref. 3; AA sequence." evidence="14" ref="3">
    <original>Q</original>
    <variation>R</variation>
    <location>
        <position position="57"/>
    </location>
</feature>
<feature type="sequence conflict" description="In Ref. 1." evidence="14" ref="1">
    <original>PG</original>
    <variation>RV</variation>
    <location>
        <begin position="60"/>
        <end position="61"/>
    </location>
</feature>
<feature type="sequence conflict" description="In Ref. 3; AA sequence." evidence="14" ref="3">
    <original>S</original>
    <variation>G</variation>
    <location>
        <position position="62"/>
    </location>
</feature>
<feature type="sequence conflict" description="In Ref. 6; AA sequence." evidence="14" ref="6">
    <original>S</original>
    <variation>R</variation>
    <location>
        <position position="62"/>
    </location>
</feature>
<feature type="sequence conflict" description="In Ref. 1." evidence="14" ref="1">
    <original>T</original>
    <variation>I</variation>
    <location>
        <position position="66"/>
    </location>
</feature>
<feature type="sequence conflict" description="In Ref. 5; AA sequence." evidence="14" ref="5">
    <original>T</original>
    <variation>N</variation>
    <location>
        <position position="66"/>
    </location>
</feature>
<feature type="sequence conflict" description="In Ref. 3; AA sequence." evidence="14" ref="3">
    <original>V</original>
    <variation>L</variation>
    <location>
        <position position="67"/>
    </location>
</feature>
<feature type="sequence conflict" description="In Ref. 6; AA sequence." evidence="14" ref="6">
    <original>Y</original>
    <variation>F</variation>
    <location>
        <position position="69"/>
    </location>
</feature>
<feature type="sequence conflict" description="In Ref. 4; AA sequence and 3; AA sequence." evidence="14" ref="4 3">
    <original>E</original>
    <variation>D</variation>
    <location>
        <position position="70"/>
    </location>
</feature>
<feature type="sequence conflict" description="In Ref. 5; AA sequence." evidence="14" ref="5">
    <original>D</original>
    <variation>N</variation>
    <location>
        <position position="71"/>
    </location>
</feature>
<feature type="sequence conflict" description="In Ref. 3; AA sequence." evidence="14" ref="3">
    <original>D</original>
    <variation>T</variation>
    <location>
        <position position="71"/>
    </location>
</feature>
<feature type="sequence conflict" description="In Ref. 6; AA sequence." evidence="14" ref="6">
    <original>N</original>
    <variation>T</variation>
    <location>
        <position position="72"/>
    </location>
</feature>
<feature type="sequence conflict" description="In Ref. 1." evidence="14" ref="1">
    <original>S</original>
    <variation>L</variation>
    <location>
        <position position="76"/>
    </location>
</feature>
<feature type="sequence conflict" description="In Ref. 5; AA sequence." evidence="14" ref="5">
    <original>G</original>
    <variation>E</variation>
    <location>
        <position position="77"/>
    </location>
</feature>
<feature type="sequence conflict" description="In Ref. 3; AA sequence." evidence="14" ref="3">
    <original>D</original>
    <variation>N</variation>
    <location>
        <position position="80"/>
    </location>
</feature>
<feature type="sequence conflict" description="In Ref. 3; AA sequence." evidence="14" ref="3">
    <original>I</original>
    <variation>F</variation>
    <location>
        <position position="86"/>
    </location>
</feature>
<feature type="sequence conflict" description="In Ref. 4; AA sequence." evidence="14" ref="4">
    <original>SSS</original>
    <variation>DSA</variation>
    <location>
        <begin position="88"/>
        <end position="90"/>
    </location>
</feature>
<feature type="sequence conflict" description="In Ref. 6; AA sequence." evidence="14" ref="6">
    <original>S</original>
    <variation>R</variation>
    <location>
        <position position="88"/>
    </location>
</feature>
<feature type="sequence conflict" description="In Ref. 3; AA sequence." evidence="14" ref="3">
    <original>KTEDEADYY</original>
    <variation>TNDDTAMYF</variation>
    <location>
        <begin position="101"/>
        <end position="109"/>
    </location>
</feature>
<feature type="sequence conflict" description="In Ref. 6; AA sequence." evidence="14" ref="6">
    <original>K</original>
    <variation>Q</variation>
    <location>
        <position position="101"/>
    </location>
</feature>
<feature type="sequence conflict" description="In Ref. 1." evidence="14" ref="1">
    <original>YDSS</original>
    <variation>FDNT</variation>
    <location>
        <begin position="113"/>
        <end position="116"/>
    </location>
</feature>
<feature type="sequence conflict" description="In Ref. 4; AA sequence." evidence="14" ref="4">
    <original>DSSN</original>
    <variation>NSNH</variation>
    <location>
        <begin position="114"/>
        <end position="117"/>
    </location>
</feature>
<feature type="sequence conflict" description="In Ref. 5; AA sequence." evidence="14" ref="5">
    <original>SSN</original>
    <variation>NNN</variation>
    <location>
        <begin position="115"/>
        <end position="117"/>
    </location>
</feature>
<feature type="sequence conflict" description="In Ref. 6; AA sequence." evidence="14" ref="6">
    <original>SSN</original>
    <variation>RDH</variation>
    <location>
        <begin position="115"/>
        <end position="117"/>
    </location>
</feature>
<feature type="non-terminal residue">
    <location>
        <position position="117"/>
    </location>
</feature>
<feature type="strand" evidence="21">
    <location>
        <begin position="22"/>
        <end position="24"/>
    </location>
</feature>
<feature type="strand" evidence="20">
    <location>
        <begin position="27"/>
        <end position="31"/>
    </location>
</feature>
<feature type="strand" evidence="20">
    <location>
        <begin position="37"/>
        <end position="46"/>
    </location>
</feature>
<feature type="helix" evidence="20">
    <location>
        <begin position="48"/>
        <end position="50"/>
    </location>
</feature>
<feature type="strand" evidence="20">
    <location>
        <begin position="54"/>
        <end position="58"/>
    </location>
</feature>
<feature type="strand" evidence="20">
    <location>
        <begin position="65"/>
        <end position="69"/>
    </location>
</feature>
<feature type="turn" evidence="20">
    <location>
        <begin position="70"/>
        <end position="72"/>
    </location>
</feature>
<feature type="strand" evidence="20">
    <location>
        <begin position="82"/>
        <end position="87"/>
    </location>
</feature>
<feature type="turn" evidence="20">
    <location>
        <begin position="88"/>
        <end position="91"/>
    </location>
</feature>
<feature type="strand" evidence="20">
    <location>
        <begin position="92"/>
        <end position="97"/>
    </location>
</feature>
<feature type="helix" evidence="20">
    <location>
        <begin position="102"/>
        <end position="104"/>
    </location>
</feature>
<feature type="strand" evidence="20">
    <location>
        <begin position="106"/>
        <end position="114"/>
    </location>
</feature>
<organism>
    <name type="scientific">Homo sapiens</name>
    <name type="common">Human</name>
    <dbReference type="NCBI Taxonomy" id="9606"/>
    <lineage>
        <taxon>Eukaryota</taxon>
        <taxon>Metazoa</taxon>
        <taxon>Chordata</taxon>
        <taxon>Craniata</taxon>
        <taxon>Vertebrata</taxon>
        <taxon>Euteleostomi</taxon>
        <taxon>Mammalia</taxon>
        <taxon>Eutheria</taxon>
        <taxon>Euarchontoglires</taxon>
        <taxon>Primates</taxon>
        <taxon>Haplorrhini</taxon>
        <taxon>Catarrhini</taxon>
        <taxon>Hominidae</taxon>
        <taxon>Homo</taxon>
    </lineage>
</organism>
<gene>
    <name evidence="8 13" type="primary">IGLV6-57</name>
</gene>
<proteinExistence type="evidence at protein level"/>
<sequence>MAWAPLLLTLLAHCTGSWANFMLTQPHSVSESPGKTVTISCTGSSGSIASNYVQWYQQRPGSAPTTVIYEDNQRPSGVPDRFSGSIDSSSNSASLTISGLKTEDEADYYCQSYDSSN</sequence>